<name>CEDA_SALAR</name>
<comment type="function">
    <text evidence="1">Activates the cell division inhibited by chromosomal DNA over-replication.</text>
</comment>
<comment type="similarity">
    <text evidence="1">Belongs to the CedA family.</text>
</comment>
<evidence type="ECO:0000255" key="1">
    <source>
        <dbReference type="HAMAP-Rule" id="MF_01580"/>
    </source>
</evidence>
<keyword id="KW-0131">Cell cycle</keyword>
<keyword id="KW-0132">Cell division</keyword>
<keyword id="KW-0238">DNA-binding</keyword>
<keyword id="KW-1185">Reference proteome</keyword>
<sequence length="80" mass="9372">MMKPLRQQNRQIISYIPRVEPAPPEHAIKMDAFRDVWILRGKYVAFVLMGESFQRSPAFSVPESAQRWANQVRQENEIAD</sequence>
<proteinExistence type="inferred from homology"/>
<feature type="chain" id="PRO_1000087933" description="Cell division activator CedA">
    <location>
        <begin position="1"/>
        <end position="80"/>
    </location>
</feature>
<accession>A9MFE4</accession>
<protein>
    <recommendedName>
        <fullName evidence="1">Cell division activator CedA</fullName>
    </recommendedName>
</protein>
<gene>
    <name evidence="1" type="primary">cedA</name>
    <name type="ordered locus">SARI_01657</name>
</gene>
<organism>
    <name type="scientific">Salmonella arizonae (strain ATCC BAA-731 / CDC346-86 / RSK2980)</name>
    <dbReference type="NCBI Taxonomy" id="41514"/>
    <lineage>
        <taxon>Bacteria</taxon>
        <taxon>Pseudomonadati</taxon>
        <taxon>Pseudomonadota</taxon>
        <taxon>Gammaproteobacteria</taxon>
        <taxon>Enterobacterales</taxon>
        <taxon>Enterobacteriaceae</taxon>
        <taxon>Salmonella</taxon>
    </lineage>
</organism>
<dbReference type="EMBL" id="CP000880">
    <property type="protein sequence ID" value="ABX21549.1"/>
    <property type="molecule type" value="Genomic_DNA"/>
</dbReference>
<dbReference type="SMR" id="A9MFE4"/>
<dbReference type="STRING" id="41514.SARI_01657"/>
<dbReference type="KEGG" id="ses:SARI_01657"/>
<dbReference type="HOGENOM" id="CLU_167445_0_0_6"/>
<dbReference type="Proteomes" id="UP000002084">
    <property type="component" value="Chromosome"/>
</dbReference>
<dbReference type="GO" id="GO:0003677">
    <property type="term" value="F:DNA binding"/>
    <property type="evidence" value="ECO:0007669"/>
    <property type="project" value="UniProtKB-UniRule"/>
</dbReference>
<dbReference type="GO" id="GO:0051301">
    <property type="term" value="P:cell division"/>
    <property type="evidence" value="ECO:0007669"/>
    <property type="project" value="UniProtKB-UniRule"/>
</dbReference>
<dbReference type="Gene3D" id="3.30.730.20">
    <property type="entry name" value="Cell division activator CedA"/>
    <property type="match status" value="1"/>
</dbReference>
<dbReference type="HAMAP" id="MF_01580">
    <property type="entry name" value="CedA"/>
    <property type="match status" value="1"/>
</dbReference>
<dbReference type="InterPro" id="IPR038463">
    <property type="entry name" value="CedA-like_sf"/>
</dbReference>
<dbReference type="InterPro" id="IPR019666">
    <property type="entry name" value="Cell_div_activator_CedA"/>
</dbReference>
<dbReference type="NCBIfam" id="NF007510">
    <property type="entry name" value="PRK10113.1"/>
    <property type="match status" value="1"/>
</dbReference>
<dbReference type="Pfam" id="PF10729">
    <property type="entry name" value="CedA"/>
    <property type="match status" value="1"/>
</dbReference>
<reference key="1">
    <citation type="submission" date="2007-11" db="EMBL/GenBank/DDBJ databases">
        <authorList>
            <consortium name="The Salmonella enterica serovar Arizonae Genome Sequencing Project"/>
            <person name="McClelland M."/>
            <person name="Sanderson E.K."/>
            <person name="Porwollik S."/>
            <person name="Spieth J."/>
            <person name="Clifton W.S."/>
            <person name="Fulton R."/>
            <person name="Chunyan W."/>
            <person name="Wollam A."/>
            <person name="Shah N."/>
            <person name="Pepin K."/>
            <person name="Bhonagiri V."/>
            <person name="Nash W."/>
            <person name="Johnson M."/>
            <person name="Thiruvilangam P."/>
            <person name="Wilson R."/>
        </authorList>
    </citation>
    <scope>NUCLEOTIDE SEQUENCE [LARGE SCALE GENOMIC DNA]</scope>
    <source>
        <strain>ATCC BAA-731 / CDC346-86 / RSK2980</strain>
    </source>
</reference>